<protein>
    <recommendedName>
        <fullName evidence="1">Translation initiation factor IF-1</fullName>
    </recommendedName>
</protein>
<comment type="function">
    <text evidence="1">One of the essential components for the initiation of protein synthesis. Stabilizes the binding of IF-2 and IF-3 on the 30S subunit to which N-formylmethionyl-tRNA(fMet) subsequently binds. Helps modulate mRNA selection, yielding the 30S pre-initiation complex (PIC). Upon addition of the 50S ribosomal subunit IF-1, IF-2 and IF-3 are released leaving the mature 70S translation initiation complex.</text>
</comment>
<comment type="subunit">
    <text evidence="1">Component of the 30S ribosomal translation pre-initiation complex which assembles on the 30S ribosome in the order IF-2 and IF-3, IF-1 and N-formylmethionyl-tRNA(fMet); mRNA recruitment can occur at any time during PIC assembly.</text>
</comment>
<comment type="subcellular location">
    <subcellularLocation>
        <location evidence="1">Cytoplasm</location>
    </subcellularLocation>
</comment>
<comment type="similarity">
    <text evidence="1">Belongs to the IF-1 family.</text>
</comment>
<reference key="1">
    <citation type="journal article" date="2004" name="PLoS Biol.">
        <title>Genomic insights into methanotrophy: the complete genome sequence of Methylococcus capsulatus (Bath).</title>
        <authorList>
            <person name="Ward N.L."/>
            <person name="Larsen O."/>
            <person name="Sakwa J."/>
            <person name="Bruseth L."/>
            <person name="Khouri H.M."/>
            <person name="Durkin A.S."/>
            <person name="Dimitrov G."/>
            <person name="Jiang L."/>
            <person name="Scanlan D."/>
            <person name="Kang K.H."/>
            <person name="Lewis M.R."/>
            <person name="Nelson K.E."/>
            <person name="Methe B.A."/>
            <person name="Wu M."/>
            <person name="Heidelberg J.F."/>
            <person name="Paulsen I.T."/>
            <person name="Fouts D.E."/>
            <person name="Ravel J."/>
            <person name="Tettelin H."/>
            <person name="Ren Q."/>
            <person name="Read T.D."/>
            <person name="DeBoy R.T."/>
            <person name="Seshadri R."/>
            <person name="Salzberg S.L."/>
            <person name="Jensen H.B."/>
            <person name="Birkeland N.K."/>
            <person name="Nelson W.C."/>
            <person name="Dodson R.J."/>
            <person name="Grindhaug S.H."/>
            <person name="Holt I.E."/>
            <person name="Eidhammer I."/>
            <person name="Jonasen I."/>
            <person name="Vanaken S."/>
            <person name="Utterback T.R."/>
            <person name="Feldblyum T.V."/>
            <person name="Fraser C.M."/>
            <person name="Lillehaug J.R."/>
            <person name="Eisen J.A."/>
        </authorList>
    </citation>
    <scope>NUCLEOTIDE SEQUENCE [LARGE SCALE GENOMIC DNA]</scope>
    <source>
        <strain>ATCC 33009 / NCIMB 11132 / Bath</strain>
    </source>
</reference>
<name>IF1_METCA</name>
<organism>
    <name type="scientific">Methylococcus capsulatus (strain ATCC 33009 / NCIMB 11132 / Bath)</name>
    <dbReference type="NCBI Taxonomy" id="243233"/>
    <lineage>
        <taxon>Bacteria</taxon>
        <taxon>Pseudomonadati</taxon>
        <taxon>Pseudomonadota</taxon>
        <taxon>Gammaproteobacteria</taxon>
        <taxon>Methylococcales</taxon>
        <taxon>Methylococcaceae</taxon>
        <taxon>Methylococcus</taxon>
    </lineage>
</organism>
<sequence>MSKEDHIEMEGKVIETLPNTTFRVQLDNGHVVIAHISGKMRKNYIRILTGDRVKVELTPYDLSKARITFRHR</sequence>
<keyword id="KW-0963">Cytoplasm</keyword>
<keyword id="KW-0396">Initiation factor</keyword>
<keyword id="KW-0648">Protein biosynthesis</keyword>
<keyword id="KW-1185">Reference proteome</keyword>
<keyword id="KW-0694">RNA-binding</keyword>
<keyword id="KW-0699">rRNA-binding</keyword>
<gene>
    <name evidence="1" type="primary">infA</name>
    <name type="ordered locus">MCA1790</name>
</gene>
<proteinExistence type="inferred from homology"/>
<accession>Q607H0</accession>
<dbReference type="EMBL" id="AE017282">
    <property type="protein sequence ID" value="AAU92197.1"/>
    <property type="molecule type" value="Genomic_DNA"/>
</dbReference>
<dbReference type="RefSeq" id="WP_010961043.1">
    <property type="nucleotide sequence ID" value="NC_002977.6"/>
</dbReference>
<dbReference type="SMR" id="Q607H0"/>
<dbReference type="STRING" id="243233.MCA1790"/>
<dbReference type="GeneID" id="88224038"/>
<dbReference type="KEGG" id="mca:MCA1790"/>
<dbReference type="eggNOG" id="COG0361">
    <property type="taxonomic scope" value="Bacteria"/>
</dbReference>
<dbReference type="HOGENOM" id="CLU_151267_1_0_6"/>
<dbReference type="Proteomes" id="UP000006821">
    <property type="component" value="Chromosome"/>
</dbReference>
<dbReference type="GO" id="GO:0005829">
    <property type="term" value="C:cytosol"/>
    <property type="evidence" value="ECO:0007669"/>
    <property type="project" value="TreeGrafter"/>
</dbReference>
<dbReference type="GO" id="GO:0043022">
    <property type="term" value="F:ribosome binding"/>
    <property type="evidence" value="ECO:0007669"/>
    <property type="project" value="UniProtKB-UniRule"/>
</dbReference>
<dbReference type="GO" id="GO:0019843">
    <property type="term" value="F:rRNA binding"/>
    <property type="evidence" value="ECO:0007669"/>
    <property type="project" value="UniProtKB-UniRule"/>
</dbReference>
<dbReference type="GO" id="GO:0003743">
    <property type="term" value="F:translation initiation factor activity"/>
    <property type="evidence" value="ECO:0007669"/>
    <property type="project" value="UniProtKB-UniRule"/>
</dbReference>
<dbReference type="CDD" id="cd04451">
    <property type="entry name" value="S1_IF1"/>
    <property type="match status" value="1"/>
</dbReference>
<dbReference type="FunFam" id="2.40.50.140:FF:000002">
    <property type="entry name" value="Translation initiation factor IF-1"/>
    <property type="match status" value="1"/>
</dbReference>
<dbReference type="Gene3D" id="2.40.50.140">
    <property type="entry name" value="Nucleic acid-binding proteins"/>
    <property type="match status" value="1"/>
</dbReference>
<dbReference type="HAMAP" id="MF_00075">
    <property type="entry name" value="IF_1"/>
    <property type="match status" value="1"/>
</dbReference>
<dbReference type="InterPro" id="IPR012340">
    <property type="entry name" value="NA-bd_OB-fold"/>
</dbReference>
<dbReference type="InterPro" id="IPR006196">
    <property type="entry name" value="RNA-binding_domain_S1_IF1"/>
</dbReference>
<dbReference type="InterPro" id="IPR003029">
    <property type="entry name" value="S1_domain"/>
</dbReference>
<dbReference type="InterPro" id="IPR004368">
    <property type="entry name" value="TIF_IF1"/>
</dbReference>
<dbReference type="NCBIfam" id="TIGR00008">
    <property type="entry name" value="infA"/>
    <property type="match status" value="1"/>
</dbReference>
<dbReference type="PANTHER" id="PTHR33370">
    <property type="entry name" value="TRANSLATION INITIATION FACTOR IF-1, CHLOROPLASTIC"/>
    <property type="match status" value="1"/>
</dbReference>
<dbReference type="PANTHER" id="PTHR33370:SF1">
    <property type="entry name" value="TRANSLATION INITIATION FACTOR IF-1, CHLOROPLASTIC"/>
    <property type="match status" value="1"/>
</dbReference>
<dbReference type="Pfam" id="PF01176">
    <property type="entry name" value="eIF-1a"/>
    <property type="match status" value="1"/>
</dbReference>
<dbReference type="SMART" id="SM00316">
    <property type="entry name" value="S1"/>
    <property type="match status" value="1"/>
</dbReference>
<dbReference type="SUPFAM" id="SSF50249">
    <property type="entry name" value="Nucleic acid-binding proteins"/>
    <property type="match status" value="1"/>
</dbReference>
<dbReference type="PROSITE" id="PS50832">
    <property type="entry name" value="S1_IF1_TYPE"/>
    <property type="match status" value="1"/>
</dbReference>
<evidence type="ECO:0000255" key="1">
    <source>
        <dbReference type="HAMAP-Rule" id="MF_00075"/>
    </source>
</evidence>
<feature type="chain" id="PRO_0000095818" description="Translation initiation factor IF-1">
    <location>
        <begin position="1"/>
        <end position="72"/>
    </location>
</feature>
<feature type="domain" description="S1-like" evidence="1">
    <location>
        <begin position="1"/>
        <end position="72"/>
    </location>
</feature>